<feature type="chain" id="PRO_0000203129" description="Putative uncharacterized protein YJR157W">
    <location>
        <begin position="1"/>
        <end position="120"/>
    </location>
</feature>
<reference key="1">
    <citation type="journal article" date="1996" name="EMBO J.">
        <title>Complete nucleotide sequence of Saccharomyces cerevisiae chromosome X.</title>
        <authorList>
            <person name="Galibert F."/>
            <person name="Alexandraki D."/>
            <person name="Baur A."/>
            <person name="Boles E."/>
            <person name="Chalwatzis N."/>
            <person name="Chuat J.-C."/>
            <person name="Coster F."/>
            <person name="Cziepluch C."/>
            <person name="de Haan M."/>
            <person name="Domdey H."/>
            <person name="Durand P."/>
            <person name="Entian K.-D."/>
            <person name="Gatius M."/>
            <person name="Goffeau A."/>
            <person name="Grivell L.A."/>
            <person name="Hennemann A."/>
            <person name="Herbert C.J."/>
            <person name="Heumann K."/>
            <person name="Hilger F."/>
            <person name="Hollenberg C.P."/>
            <person name="Huang M.-E."/>
            <person name="Jacq C."/>
            <person name="Jauniaux J.-C."/>
            <person name="Katsoulou C."/>
            <person name="Kirchrath L."/>
            <person name="Kleine K."/>
            <person name="Kordes E."/>
            <person name="Koetter P."/>
            <person name="Liebl S."/>
            <person name="Louis E.J."/>
            <person name="Manus V."/>
            <person name="Mewes H.-W."/>
            <person name="Miosga T."/>
            <person name="Obermaier B."/>
            <person name="Perea J."/>
            <person name="Pohl T.M."/>
            <person name="Portetelle D."/>
            <person name="Pujol A."/>
            <person name="Purnelle B."/>
            <person name="Ramezani Rad M."/>
            <person name="Rasmussen S.W."/>
            <person name="Rose M."/>
            <person name="Rossau R."/>
            <person name="Schaaff-Gerstenschlaeger I."/>
            <person name="Smits P.H.M."/>
            <person name="Scarcez T."/>
            <person name="Soriano N."/>
            <person name="To Van D."/>
            <person name="Tzermia M."/>
            <person name="Van Broekhoven A."/>
            <person name="Vandenbol M."/>
            <person name="Wedler H."/>
            <person name="von Wettstein D."/>
            <person name="Wambutt R."/>
            <person name="Zagulski M."/>
            <person name="Zollner A."/>
            <person name="Karpfinger-Hartl L."/>
        </authorList>
    </citation>
    <scope>NUCLEOTIDE SEQUENCE [LARGE SCALE GENOMIC DNA]</scope>
    <source>
        <strain>ATCC 204508 / S288c</strain>
    </source>
</reference>
<reference key="2">
    <citation type="journal article" date="2014" name="G3 (Bethesda)">
        <title>The reference genome sequence of Saccharomyces cerevisiae: Then and now.</title>
        <authorList>
            <person name="Engel S.R."/>
            <person name="Dietrich F.S."/>
            <person name="Fisk D.G."/>
            <person name="Binkley G."/>
            <person name="Balakrishnan R."/>
            <person name="Costanzo M.C."/>
            <person name="Dwight S.S."/>
            <person name="Hitz B.C."/>
            <person name="Karra K."/>
            <person name="Nash R.S."/>
            <person name="Weng S."/>
            <person name="Wong E.D."/>
            <person name="Lloyd P."/>
            <person name="Skrzypek M.S."/>
            <person name="Miyasato S.R."/>
            <person name="Simison M."/>
            <person name="Cherry J.M."/>
        </authorList>
    </citation>
    <scope>GENOME REANNOTATION</scope>
    <source>
        <strain>ATCC 204508 / S288c</strain>
    </source>
</reference>
<reference key="3">
    <citation type="journal article" date="2007" name="Genome Res.">
        <title>Approaching a complete repository of sequence-verified protein-encoding clones for Saccharomyces cerevisiae.</title>
        <authorList>
            <person name="Hu Y."/>
            <person name="Rolfs A."/>
            <person name="Bhullar B."/>
            <person name="Murthy T.V.S."/>
            <person name="Zhu C."/>
            <person name="Berger M.F."/>
            <person name="Camargo A.A."/>
            <person name="Kelley F."/>
            <person name="McCarron S."/>
            <person name="Jepson D."/>
            <person name="Richardson A."/>
            <person name="Raphael J."/>
            <person name="Moreira D."/>
            <person name="Taycher E."/>
            <person name="Zuo D."/>
            <person name="Mohr S."/>
            <person name="Kane M.F."/>
            <person name="Williamson J."/>
            <person name="Simpson A.J.G."/>
            <person name="Bulyk M.L."/>
            <person name="Harlow E."/>
            <person name="Marsischky G."/>
            <person name="Kolodner R.D."/>
            <person name="LaBaer J."/>
        </authorList>
    </citation>
    <scope>NUCLEOTIDE SEQUENCE [GENOMIC DNA]</scope>
    <source>
        <strain>ATCC 204508 / S288c</strain>
    </source>
</reference>
<evidence type="ECO:0000305" key="1">
    <source>
    </source>
</evidence>
<sequence>MDISIQCISYHTSLSKDRCSFEIGYLEYFYYISITNITILNLKVEYPKILEIHTITSQLLPKYSPPWFDIIKAPYGNKIPGIVMLFKCISISRILVSLLHYPYARRYAIVFVPSSSYSVN</sequence>
<protein>
    <recommendedName>
        <fullName>Putative uncharacterized protein YJR157W</fullName>
    </recommendedName>
</protein>
<gene>
    <name type="ordered locus">YJR157W</name>
    <name type="ORF">J2255</name>
</gene>
<comment type="caution">
    <text evidence="1">Product of a dubious gene prediction unlikely to encode a functional protein. Because of that it is not part of the S.cerevisiae S288c complete/reference proteome set.</text>
</comment>
<organism>
    <name type="scientific">Saccharomyces cerevisiae (strain ATCC 204508 / S288c)</name>
    <name type="common">Baker's yeast</name>
    <dbReference type="NCBI Taxonomy" id="559292"/>
    <lineage>
        <taxon>Eukaryota</taxon>
        <taxon>Fungi</taxon>
        <taxon>Dikarya</taxon>
        <taxon>Ascomycota</taxon>
        <taxon>Saccharomycotina</taxon>
        <taxon>Saccharomycetes</taxon>
        <taxon>Saccharomycetales</taxon>
        <taxon>Saccharomycetaceae</taxon>
        <taxon>Saccharomyces</taxon>
    </lineage>
</organism>
<accession>P47184</accession>
<proteinExistence type="uncertain"/>
<dbReference type="EMBL" id="Z49657">
    <property type="protein sequence ID" value="CAA89690.1"/>
    <property type="molecule type" value="Genomic_DNA"/>
</dbReference>
<dbReference type="EMBL" id="AY558260">
    <property type="protein sequence ID" value="AAS56586.1"/>
    <property type="molecule type" value="Genomic_DNA"/>
</dbReference>
<dbReference type="PIR" id="S57186">
    <property type="entry name" value="S57186"/>
</dbReference>
<dbReference type="DIP" id="DIP-4757N"/>
<dbReference type="PaxDb" id="4932-YJR157W"/>
<dbReference type="EnsemblFungi" id="YJR157W_mRNA">
    <property type="protein sequence ID" value="YJR157W"/>
    <property type="gene ID" value="YJR157W"/>
</dbReference>
<dbReference type="AGR" id="SGD:S000003918"/>
<dbReference type="SGD" id="S000003918">
    <property type="gene designation" value="YJR157W"/>
</dbReference>
<dbReference type="HOGENOM" id="CLU_2051488_0_0_1"/>
<name>YJ9V_YEAST</name>